<dbReference type="EC" id="1.17.7.3" evidence="1"/>
<dbReference type="EMBL" id="CP000503">
    <property type="protein sequence ID" value="ABM24198.1"/>
    <property type="molecule type" value="Genomic_DNA"/>
</dbReference>
<dbReference type="RefSeq" id="WP_011788704.1">
    <property type="nucleotide sequence ID" value="NC_008750.1"/>
</dbReference>
<dbReference type="SMR" id="A1RHQ3"/>
<dbReference type="GeneID" id="67444253"/>
<dbReference type="KEGG" id="shw:Sputw3181_1355"/>
<dbReference type="HOGENOM" id="CLU_042258_0_0_6"/>
<dbReference type="UniPathway" id="UPA00056">
    <property type="reaction ID" value="UER00096"/>
</dbReference>
<dbReference type="Proteomes" id="UP000002597">
    <property type="component" value="Chromosome"/>
</dbReference>
<dbReference type="GO" id="GO:0051539">
    <property type="term" value="F:4 iron, 4 sulfur cluster binding"/>
    <property type="evidence" value="ECO:0007669"/>
    <property type="project" value="UniProtKB-UniRule"/>
</dbReference>
<dbReference type="GO" id="GO:0046429">
    <property type="term" value="F:4-hydroxy-3-methylbut-2-en-1-yl diphosphate synthase activity (ferredoxin)"/>
    <property type="evidence" value="ECO:0007669"/>
    <property type="project" value="UniProtKB-UniRule"/>
</dbReference>
<dbReference type="GO" id="GO:0141197">
    <property type="term" value="F:4-hydroxy-3-methylbut-2-enyl-diphosphate synthase activity (flavodoxin)"/>
    <property type="evidence" value="ECO:0007669"/>
    <property type="project" value="UniProtKB-EC"/>
</dbReference>
<dbReference type="GO" id="GO:0005506">
    <property type="term" value="F:iron ion binding"/>
    <property type="evidence" value="ECO:0007669"/>
    <property type="project" value="InterPro"/>
</dbReference>
<dbReference type="GO" id="GO:0019288">
    <property type="term" value="P:isopentenyl diphosphate biosynthetic process, methylerythritol 4-phosphate pathway"/>
    <property type="evidence" value="ECO:0007669"/>
    <property type="project" value="UniProtKB-UniRule"/>
</dbReference>
<dbReference type="GO" id="GO:0016114">
    <property type="term" value="P:terpenoid biosynthetic process"/>
    <property type="evidence" value="ECO:0007669"/>
    <property type="project" value="InterPro"/>
</dbReference>
<dbReference type="FunFam" id="3.20.20.20:FF:000001">
    <property type="entry name" value="4-hydroxy-3-methylbut-2-en-1-yl diphosphate synthase (flavodoxin)"/>
    <property type="match status" value="1"/>
</dbReference>
<dbReference type="FunFam" id="3.30.413.10:FF:000002">
    <property type="entry name" value="4-hydroxy-3-methylbut-2-en-1-yl diphosphate synthase (flavodoxin)"/>
    <property type="match status" value="1"/>
</dbReference>
<dbReference type="Gene3D" id="3.20.20.20">
    <property type="entry name" value="Dihydropteroate synthase-like"/>
    <property type="match status" value="1"/>
</dbReference>
<dbReference type="Gene3D" id="3.30.413.10">
    <property type="entry name" value="Sulfite Reductase Hemoprotein, domain 1"/>
    <property type="match status" value="1"/>
</dbReference>
<dbReference type="HAMAP" id="MF_00159">
    <property type="entry name" value="IspG"/>
    <property type="match status" value="1"/>
</dbReference>
<dbReference type="InterPro" id="IPR011005">
    <property type="entry name" value="Dihydropteroate_synth-like_sf"/>
</dbReference>
<dbReference type="InterPro" id="IPR016425">
    <property type="entry name" value="IspG_bac"/>
</dbReference>
<dbReference type="InterPro" id="IPR004588">
    <property type="entry name" value="IspG_bac-typ"/>
</dbReference>
<dbReference type="InterPro" id="IPR045854">
    <property type="entry name" value="NO2/SO3_Rdtase_4Fe4S_sf"/>
</dbReference>
<dbReference type="NCBIfam" id="TIGR00612">
    <property type="entry name" value="ispG_gcpE"/>
    <property type="match status" value="1"/>
</dbReference>
<dbReference type="NCBIfam" id="NF001540">
    <property type="entry name" value="PRK00366.1"/>
    <property type="match status" value="1"/>
</dbReference>
<dbReference type="PANTHER" id="PTHR30454">
    <property type="entry name" value="4-HYDROXY-3-METHYLBUT-2-EN-1-YL DIPHOSPHATE SYNTHASE"/>
    <property type="match status" value="1"/>
</dbReference>
<dbReference type="PANTHER" id="PTHR30454:SF0">
    <property type="entry name" value="4-HYDROXY-3-METHYLBUT-2-EN-1-YL DIPHOSPHATE SYNTHASE (FERREDOXIN), CHLOROPLASTIC"/>
    <property type="match status" value="1"/>
</dbReference>
<dbReference type="Pfam" id="PF04551">
    <property type="entry name" value="GcpE"/>
    <property type="match status" value="1"/>
</dbReference>
<dbReference type="PIRSF" id="PIRSF004640">
    <property type="entry name" value="IspG"/>
    <property type="match status" value="1"/>
</dbReference>
<dbReference type="SUPFAM" id="SSF51717">
    <property type="entry name" value="Dihydropteroate synthetase-like"/>
    <property type="match status" value="1"/>
</dbReference>
<dbReference type="SUPFAM" id="SSF56014">
    <property type="entry name" value="Nitrite and sulphite reductase 4Fe-4S domain-like"/>
    <property type="match status" value="1"/>
</dbReference>
<evidence type="ECO:0000255" key="1">
    <source>
        <dbReference type="HAMAP-Rule" id="MF_00159"/>
    </source>
</evidence>
<protein>
    <recommendedName>
        <fullName evidence="1">4-hydroxy-3-methylbut-2-en-1-yl diphosphate synthase (flavodoxin)</fullName>
        <ecNumber evidence="1">1.17.7.3</ecNumber>
    </recommendedName>
    <alternativeName>
        <fullName evidence="1">1-hydroxy-2-methyl-2-(E)-butenyl 4-diphosphate synthase</fullName>
    </alternativeName>
</protein>
<reference key="1">
    <citation type="submission" date="2006-12" db="EMBL/GenBank/DDBJ databases">
        <title>Complete sequence of Shewanella sp. W3-18-1.</title>
        <authorList>
            <consortium name="US DOE Joint Genome Institute"/>
            <person name="Copeland A."/>
            <person name="Lucas S."/>
            <person name="Lapidus A."/>
            <person name="Barry K."/>
            <person name="Detter J.C."/>
            <person name="Glavina del Rio T."/>
            <person name="Hammon N."/>
            <person name="Israni S."/>
            <person name="Dalin E."/>
            <person name="Tice H."/>
            <person name="Pitluck S."/>
            <person name="Chain P."/>
            <person name="Malfatti S."/>
            <person name="Shin M."/>
            <person name="Vergez L."/>
            <person name="Schmutz J."/>
            <person name="Larimer F."/>
            <person name="Land M."/>
            <person name="Hauser L."/>
            <person name="Kyrpides N."/>
            <person name="Lykidis A."/>
            <person name="Tiedje J."/>
            <person name="Richardson P."/>
        </authorList>
    </citation>
    <scope>NUCLEOTIDE SEQUENCE [LARGE SCALE GENOMIC DNA]</scope>
    <source>
        <strain>W3-18-1</strain>
    </source>
</reference>
<comment type="function">
    <text evidence="1">Converts 2C-methyl-D-erythritol 2,4-cyclodiphosphate (ME-2,4cPP) into 1-hydroxy-2-methyl-2-(E)-butenyl 4-diphosphate.</text>
</comment>
<comment type="catalytic activity">
    <reaction evidence="1">
        <text>(2E)-4-hydroxy-3-methylbut-2-enyl diphosphate + oxidized [flavodoxin] + H2O + 2 H(+) = 2-C-methyl-D-erythritol 2,4-cyclic diphosphate + reduced [flavodoxin]</text>
        <dbReference type="Rhea" id="RHEA:43604"/>
        <dbReference type="Rhea" id="RHEA-COMP:10622"/>
        <dbReference type="Rhea" id="RHEA-COMP:10623"/>
        <dbReference type="ChEBI" id="CHEBI:15377"/>
        <dbReference type="ChEBI" id="CHEBI:15378"/>
        <dbReference type="ChEBI" id="CHEBI:57618"/>
        <dbReference type="ChEBI" id="CHEBI:58210"/>
        <dbReference type="ChEBI" id="CHEBI:58483"/>
        <dbReference type="ChEBI" id="CHEBI:128753"/>
        <dbReference type="EC" id="1.17.7.3"/>
    </reaction>
</comment>
<comment type="cofactor">
    <cofactor evidence="1">
        <name>[4Fe-4S] cluster</name>
        <dbReference type="ChEBI" id="CHEBI:49883"/>
    </cofactor>
    <text evidence="1">Binds 1 [4Fe-4S] cluster.</text>
</comment>
<comment type="pathway">
    <text evidence="1">Isoprenoid biosynthesis; isopentenyl diphosphate biosynthesis via DXP pathway; isopentenyl diphosphate from 1-deoxy-D-xylulose 5-phosphate: step 5/6.</text>
</comment>
<comment type="similarity">
    <text evidence="1">Belongs to the IspG family.</text>
</comment>
<proteinExistence type="inferred from homology"/>
<keyword id="KW-0004">4Fe-4S</keyword>
<keyword id="KW-0408">Iron</keyword>
<keyword id="KW-0411">Iron-sulfur</keyword>
<keyword id="KW-0414">Isoprene biosynthesis</keyword>
<keyword id="KW-0479">Metal-binding</keyword>
<keyword id="KW-0560">Oxidoreductase</keyword>
<gene>
    <name evidence="1" type="primary">ispG</name>
    <name type="ordered locus">Sputw3181_1355</name>
</gene>
<sequence length="371" mass="40619">MYNETPIKRRPSTRIYVGNVPIGDGAPIAVQSMTNTKTTDVEATIAQIRALEKVGADIVRVSVPTMDAAEAFKIIKQSVNVPLVADIHFDYRIALKVAEYGVDCLRINPGNIGNEERIRSVVECARDKNIPIRIGVNGGSLEKDLMDKYKEPTPEALLESAMRHVDILDRMNFDQFKVSVKASDVFLAVESYRLLAKQIRQPLHLGITEAGGARAGSVKSAVGLGMLLAEGIGDTLRISLAADPVEEIKVGFDILKSLRIRSRGINFIACPSCSRQEFDVISTVNELERRLEDVTTAMDVSIIGCVVNGPGEALVSHIGLTGGHNKSGYYDEGERQKERFDNDNLVDSLEAKIRAKASQLANRIQVKDTTE</sequence>
<name>ISPG_SHESW</name>
<organism>
    <name type="scientific">Shewanella sp. (strain W3-18-1)</name>
    <dbReference type="NCBI Taxonomy" id="351745"/>
    <lineage>
        <taxon>Bacteria</taxon>
        <taxon>Pseudomonadati</taxon>
        <taxon>Pseudomonadota</taxon>
        <taxon>Gammaproteobacteria</taxon>
        <taxon>Alteromonadales</taxon>
        <taxon>Shewanellaceae</taxon>
        <taxon>Shewanella</taxon>
    </lineage>
</organism>
<accession>A1RHQ3</accession>
<feature type="chain" id="PRO_1000011524" description="4-hydroxy-3-methylbut-2-en-1-yl diphosphate synthase (flavodoxin)">
    <location>
        <begin position="1"/>
        <end position="371"/>
    </location>
</feature>
<feature type="binding site" evidence="1">
    <location>
        <position position="270"/>
    </location>
    <ligand>
        <name>[4Fe-4S] cluster</name>
        <dbReference type="ChEBI" id="CHEBI:49883"/>
    </ligand>
</feature>
<feature type="binding site" evidence="1">
    <location>
        <position position="273"/>
    </location>
    <ligand>
        <name>[4Fe-4S] cluster</name>
        <dbReference type="ChEBI" id="CHEBI:49883"/>
    </ligand>
</feature>
<feature type="binding site" evidence="1">
    <location>
        <position position="305"/>
    </location>
    <ligand>
        <name>[4Fe-4S] cluster</name>
        <dbReference type="ChEBI" id="CHEBI:49883"/>
    </ligand>
</feature>
<feature type="binding site" evidence="1">
    <location>
        <position position="312"/>
    </location>
    <ligand>
        <name>[4Fe-4S] cluster</name>
        <dbReference type="ChEBI" id="CHEBI:49883"/>
    </ligand>
</feature>